<keyword id="KW-0488">Methylation</keyword>
<keyword id="KW-0687">Ribonucleoprotein</keyword>
<keyword id="KW-0689">Ribosomal protein</keyword>
<keyword id="KW-0694">RNA-binding</keyword>
<keyword id="KW-0699">rRNA-binding</keyword>
<gene>
    <name evidence="1" type="primary">rplC</name>
    <name type="ordered locus">YpAngola_A0584</name>
</gene>
<accession>A9R8Z6</accession>
<dbReference type="EMBL" id="CP000901">
    <property type="protein sequence ID" value="ABX86028.1"/>
    <property type="molecule type" value="Genomic_DNA"/>
</dbReference>
<dbReference type="RefSeq" id="WP_002218932.1">
    <property type="nucleotide sequence ID" value="NZ_CP009935.1"/>
</dbReference>
<dbReference type="SMR" id="A9R8Z6"/>
<dbReference type="GeneID" id="96663196"/>
<dbReference type="KEGG" id="ypg:YpAngola_A0584"/>
<dbReference type="PATRIC" id="fig|349746.12.peg.1533"/>
<dbReference type="GO" id="GO:0022625">
    <property type="term" value="C:cytosolic large ribosomal subunit"/>
    <property type="evidence" value="ECO:0007669"/>
    <property type="project" value="TreeGrafter"/>
</dbReference>
<dbReference type="GO" id="GO:0019843">
    <property type="term" value="F:rRNA binding"/>
    <property type="evidence" value="ECO:0007669"/>
    <property type="project" value="UniProtKB-UniRule"/>
</dbReference>
<dbReference type="GO" id="GO:0003735">
    <property type="term" value="F:structural constituent of ribosome"/>
    <property type="evidence" value="ECO:0007669"/>
    <property type="project" value="InterPro"/>
</dbReference>
<dbReference type="GO" id="GO:0006412">
    <property type="term" value="P:translation"/>
    <property type="evidence" value="ECO:0007669"/>
    <property type="project" value="UniProtKB-UniRule"/>
</dbReference>
<dbReference type="FunFam" id="2.40.30.10:FF:000004">
    <property type="entry name" value="50S ribosomal protein L3"/>
    <property type="match status" value="1"/>
</dbReference>
<dbReference type="FunFam" id="3.30.160.810:FF:000001">
    <property type="entry name" value="50S ribosomal protein L3"/>
    <property type="match status" value="1"/>
</dbReference>
<dbReference type="Gene3D" id="3.30.160.810">
    <property type="match status" value="1"/>
</dbReference>
<dbReference type="Gene3D" id="2.40.30.10">
    <property type="entry name" value="Translation factors"/>
    <property type="match status" value="1"/>
</dbReference>
<dbReference type="HAMAP" id="MF_01325_B">
    <property type="entry name" value="Ribosomal_uL3_B"/>
    <property type="match status" value="1"/>
</dbReference>
<dbReference type="InterPro" id="IPR000597">
    <property type="entry name" value="Ribosomal_uL3"/>
</dbReference>
<dbReference type="InterPro" id="IPR019927">
    <property type="entry name" value="Ribosomal_uL3_bac/org-type"/>
</dbReference>
<dbReference type="InterPro" id="IPR019926">
    <property type="entry name" value="Ribosomal_uL3_CS"/>
</dbReference>
<dbReference type="InterPro" id="IPR009000">
    <property type="entry name" value="Transl_B-barrel_sf"/>
</dbReference>
<dbReference type="NCBIfam" id="TIGR03625">
    <property type="entry name" value="L3_bact"/>
    <property type="match status" value="1"/>
</dbReference>
<dbReference type="PANTHER" id="PTHR11229">
    <property type="entry name" value="50S RIBOSOMAL PROTEIN L3"/>
    <property type="match status" value="1"/>
</dbReference>
<dbReference type="PANTHER" id="PTHR11229:SF16">
    <property type="entry name" value="LARGE RIBOSOMAL SUBUNIT PROTEIN UL3C"/>
    <property type="match status" value="1"/>
</dbReference>
<dbReference type="Pfam" id="PF00297">
    <property type="entry name" value="Ribosomal_L3"/>
    <property type="match status" value="1"/>
</dbReference>
<dbReference type="SUPFAM" id="SSF50447">
    <property type="entry name" value="Translation proteins"/>
    <property type="match status" value="1"/>
</dbReference>
<dbReference type="PROSITE" id="PS00474">
    <property type="entry name" value="RIBOSOMAL_L3"/>
    <property type="match status" value="1"/>
</dbReference>
<name>RL3_YERPG</name>
<proteinExistence type="inferred from homology"/>
<reference key="1">
    <citation type="journal article" date="2010" name="J. Bacteriol.">
        <title>Genome sequence of the deep-rooted Yersinia pestis strain Angola reveals new insights into the evolution and pangenome of the plague bacterium.</title>
        <authorList>
            <person name="Eppinger M."/>
            <person name="Worsham P.L."/>
            <person name="Nikolich M.P."/>
            <person name="Riley D.R."/>
            <person name="Sebastian Y."/>
            <person name="Mou S."/>
            <person name="Achtman M."/>
            <person name="Lindler L.E."/>
            <person name="Ravel J."/>
        </authorList>
    </citation>
    <scope>NUCLEOTIDE SEQUENCE [LARGE SCALE GENOMIC DNA]</scope>
    <source>
        <strain>Angola</strain>
    </source>
</reference>
<evidence type="ECO:0000255" key="1">
    <source>
        <dbReference type="HAMAP-Rule" id="MF_01325"/>
    </source>
</evidence>
<evidence type="ECO:0000256" key="2">
    <source>
        <dbReference type="SAM" id="MobiDB-lite"/>
    </source>
</evidence>
<evidence type="ECO:0000305" key="3"/>
<comment type="function">
    <text evidence="1">One of the primary rRNA binding proteins, it binds directly near the 3'-end of the 23S rRNA, where it nucleates assembly of the 50S subunit.</text>
</comment>
<comment type="subunit">
    <text evidence="1">Part of the 50S ribosomal subunit. Forms a cluster with proteins L14 and L19.</text>
</comment>
<comment type="PTM">
    <text evidence="1">Methylated by PrmB.</text>
</comment>
<comment type="similarity">
    <text evidence="1">Belongs to the universal ribosomal protein uL3 family.</text>
</comment>
<feature type="chain" id="PRO_1000141946" description="Large ribosomal subunit protein uL3">
    <location>
        <begin position="1"/>
        <end position="209"/>
    </location>
</feature>
<feature type="region of interest" description="Disordered" evidence="2">
    <location>
        <begin position="133"/>
        <end position="152"/>
    </location>
</feature>
<feature type="modified residue" description="N5-methylglutamine" evidence="1">
    <location>
        <position position="150"/>
    </location>
</feature>
<protein>
    <recommendedName>
        <fullName evidence="1">Large ribosomal subunit protein uL3</fullName>
    </recommendedName>
    <alternativeName>
        <fullName evidence="3">50S ribosomal protein L3</fullName>
    </alternativeName>
</protein>
<organism>
    <name type="scientific">Yersinia pestis bv. Antiqua (strain Angola)</name>
    <dbReference type="NCBI Taxonomy" id="349746"/>
    <lineage>
        <taxon>Bacteria</taxon>
        <taxon>Pseudomonadati</taxon>
        <taxon>Pseudomonadota</taxon>
        <taxon>Gammaproteobacteria</taxon>
        <taxon>Enterobacterales</taxon>
        <taxon>Yersiniaceae</taxon>
        <taxon>Yersinia</taxon>
    </lineage>
</organism>
<sequence>MIGLVGKKVGMTRIFTEDGVSIPVTVIEIEANRVTQVKSLENDGYRAVQVTTGAKKANRVTKPEAGHFAKAGVEAGRGLWEFRLPEGQEFTAGQEISVEIFADVKKVDVTGTSKGKGFAGTVKRWNFRTQDATHGNSLSHRVPGSIGQNQTPGKVFKGKKMAGHMGDERVTVQSLDVVRVDAERNLLLVKGAVPGATGGNLIVKPAVKA</sequence>